<organismHost>
    <name type="scientific">Acidianus convivator</name>
    <dbReference type="NCBI Taxonomy" id="269667"/>
</organismHost>
<sequence>MITVNCIKLKQAFEQAKILKNDPYDFALAMTHFYLSNEGLETPTGYSVPSSELKELIKKNELLIHYILDEGEDFMEACEKVHGS</sequence>
<protein>
    <recommendedName>
        <fullName>Uncharacterized protein ORF84</fullName>
    </recommendedName>
</protein>
<keyword id="KW-1185">Reference proteome</keyword>
<name>Y084_ATV</name>
<organism>
    <name type="scientific">Acidianus two-tailed virus</name>
    <name type="common">ATV</name>
    <dbReference type="NCBI Taxonomy" id="315953"/>
    <lineage>
        <taxon>Viruses</taxon>
        <taxon>Viruses incertae sedis</taxon>
        <taxon>Bicaudaviridae</taxon>
        <taxon>Bicaudavirus</taxon>
    </lineage>
</organism>
<feature type="chain" id="PRO_0000389095" description="Uncharacterized protein ORF84">
    <location>
        <begin position="1"/>
        <end position="84"/>
    </location>
</feature>
<reference key="1">
    <citation type="journal article" date="2005" name="Nature">
        <title>Virology: independent virus development outside a host.</title>
        <authorList>
            <person name="Haring M."/>
            <person name="Vestergaard G."/>
            <person name="Rachel R."/>
            <person name="Chen L."/>
            <person name="Garrett R.A."/>
            <person name="Prangishvili D."/>
        </authorList>
    </citation>
    <scope>NUCLEOTIDE SEQUENCE [GENOMIC DNA]</scope>
</reference>
<dbReference type="EMBL" id="AJ888457">
    <property type="protein sequence ID" value="CAI59863.1"/>
    <property type="molecule type" value="Genomic_DNA"/>
</dbReference>
<dbReference type="RefSeq" id="YP_319868.1">
    <property type="nucleotide sequence ID" value="NC_007409.1"/>
</dbReference>
<dbReference type="GeneID" id="4484238"/>
<dbReference type="KEGG" id="vg:4484238"/>
<dbReference type="Proteomes" id="UP000002150">
    <property type="component" value="Genome"/>
</dbReference>
<proteinExistence type="predicted"/>
<accession>Q3V4V1</accession>